<protein>
    <recommendedName>
        <fullName evidence="1">3-dehydroquinate synthase</fullName>
        <shortName evidence="1">DHQS</shortName>
        <ecNumber evidence="1">4.2.3.4</ecNumber>
    </recommendedName>
</protein>
<keyword id="KW-0028">Amino-acid biosynthesis</keyword>
<keyword id="KW-0057">Aromatic amino acid biosynthesis</keyword>
<keyword id="KW-0170">Cobalt</keyword>
<keyword id="KW-0963">Cytoplasm</keyword>
<keyword id="KW-0456">Lyase</keyword>
<keyword id="KW-0479">Metal-binding</keyword>
<keyword id="KW-0520">NAD</keyword>
<keyword id="KW-0547">Nucleotide-binding</keyword>
<keyword id="KW-1185">Reference proteome</keyword>
<keyword id="KW-0862">Zinc</keyword>
<reference key="1">
    <citation type="journal article" date="2009" name="PLoS ONE">
        <title>The complete genome of Teredinibacter turnerae T7901: an intracellular endosymbiont of marine wood-boring bivalves (shipworms).</title>
        <authorList>
            <person name="Yang J.C."/>
            <person name="Madupu R."/>
            <person name="Durkin A.S."/>
            <person name="Ekborg N.A."/>
            <person name="Pedamallu C.S."/>
            <person name="Hostetler J.B."/>
            <person name="Radune D."/>
            <person name="Toms B.S."/>
            <person name="Henrissat B."/>
            <person name="Coutinho P.M."/>
            <person name="Schwarz S."/>
            <person name="Field L."/>
            <person name="Trindade-Silva A.E."/>
            <person name="Soares C.A.G."/>
            <person name="Elshahawi S."/>
            <person name="Hanora A."/>
            <person name="Schmidt E.W."/>
            <person name="Haygood M.G."/>
            <person name="Posfai J."/>
            <person name="Benner J."/>
            <person name="Madinger C."/>
            <person name="Nove J."/>
            <person name="Anton B."/>
            <person name="Chaudhary K."/>
            <person name="Foster J."/>
            <person name="Holman A."/>
            <person name="Kumar S."/>
            <person name="Lessard P.A."/>
            <person name="Luyten Y.A."/>
            <person name="Slatko B."/>
            <person name="Wood N."/>
            <person name="Wu B."/>
            <person name="Teplitski M."/>
            <person name="Mougous J.D."/>
            <person name="Ward N."/>
            <person name="Eisen J.A."/>
            <person name="Badger J.H."/>
            <person name="Distel D.L."/>
        </authorList>
    </citation>
    <scope>NUCLEOTIDE SEQUENCE [LARGE SCALE GENOMIC DNA]</scope>
    <source>
        <strain>ATCC 39867 / T7901</strain>
    </source>
</reference>
<comment type="function">
    <text evidence="1">Catalyzes the conversion of 3-deoxy-D-arabino-heptulosonate 7-phosphate (DAHP) to dehydroquinate (DHQ).</text>
</comment>
<comment type="catalytic activity">
    <reaction evidence="1">
        <text>7-phospho-2-dehydro-3-deoxy-D-arabino-heptonate = 3-dehydroquinate + phosphate</text>
        <dbReference type="Rhea" id="RHEA:21968"/>
        <dbReference type="ChEBI" id="CHEBI:32364"/>
        <dbReference type="ChEBI" id="CHEBI:43474"/>
        <dbReference type="ChEBI" id="CHEBI:58394"/>
        <dbReference type="EC" id="4.2.3.4"/>
    </reaction>
</comment>
<comment type="cofactor">
    <cofactor evidence="1">
        <name>Co(2+)</name>
        <dbReference type="ChEBI" id="CHEBI:48828"/>
    </cofactor>
    <cofactor evidence="1">
        <name>Zn(2+)</name>
        <dbReference type="ChEBI" id="CHEBI:29105"/>
    </cofactor>
    <text evidence="1">Binds 1 divalent metal cation per subunit. Can use either Co(2+) or Zn(2+).</text>
</comment>
<comment type="cofactor">
    <cofactor evidence="1">
        <name>NAD(+)</name>
        <dbReference type="ChEBI" id="CHEBI:57540"/>
    </cofactor>
</comment>
<comment type="pathway">
    <text evidence="1">Metabolic intermediate biosynthesis; chorismate biosynthesis; chorismate from D-erythrose 4-phosphate and phosphoenolpyruvate: step 2/7.</text>
</comment>
<comment type="subcellular location">
    <subcellularLocation>
        <location evidence="1">Cytoplasm</location>
    </subcellularLocation>
</comment>
<comment type="similarity">
    <text evidence="1">Belongs to the sugar phosphate cyclases superfamily. Dehydroquinate synthase family.</text>
</comment>
<dbReference type="EC" id="4.2.3.4" evidence="1"/>
<dbReference type="EMBL" id="CP001614">
    <property type="protein sequence ID" value="ACR11296.1"/>
    <property type="molecule type" value="Genomic_DNA"/>
</dbReference>
<dbReference type="RefSeq" id="WP_015817408.1">
    <property type="nucleotide sequence ID" value="NC_012997.1"/>
</dbReference>
<dbReference type="SMR" id="C5BRJ7"/>
<dbReference type="STRING" id="377629.TERTU_3579"/>
<dbReference type="KEGG" id="ttu:TERTU_3579"/>
<dbReference type="eggNOG" id="COG0337">
    <property type="taxonomic scope" value="Bacteria"/>
</dbReference>
<dbReference type="HOGENOM" id="CLU_001201_0_2_6"/>
<dbReference type="OrthoDB" id="9806583at2"/>
<dbReference type="UniPathway" id="UPA00053">
    <property type="reaction ID" value="UER00085"/>
</dbReference>
<dbReference type="Proteomes" id="UP000009080">
    <property type="component" value="Chromosome"/>
</dbReference>
<dbReference type="GO" id="GO:0005737">
    <property type="term" value="C:cytoplasm"/>
    <property type="evidence" value="ECO:0007669"/>
    <property type="project" value="UniProtKB-SubCell"/>
</dbReference>
<dbReference type="GO" id="GO:0003856">
    <property type="term" value="F:3-dehydroquinate synthase activity"/>
    <property type="evidence" value="ECO:0007669"/>
    <property type="project" value="UniProtKB-UniRule"/>
</dbReference>
<dbReference type="GO" id="GO:0046872">
    <property type="term" value="F:metal ion binding"/>
    <property type="evidence" value="ECO:0007669"/>
    <property type="project" value="UniProtKB-KW"/>
</dbReference>
<dbReference type="GO" id="GO:0000166">
    <property type="term" value="F:nucleotide binding"/>
    <property type="evidence" value="ECO:0007669"/>
    <property type="project" value="UniProtKB-KW"/>
</dbReference>
<dbReference type="GO" id="GO:0008652">
    <property type="term" value="P:amino acid biosynthetic process"/>
    <property type="evidence" value="ECO:0007669"/>
    <property type="project" value="UniProtKB-KW"/>
</dbReference>
<dbReference type="GO" id="GO:0009073">
    <property type="term" value="P:aromatic amino acid family biosynthetic process"/>
    <property type="evidence" value="ECO:0007669"/>
    <property type="project" value="UniProtKB-KW"/>
</dbReference>
<dbReference type="GO" id="GO:0009423">
    <property type="term" value="P:chorismate biosynthetic process"/>
    <property type="evidence" value="ECO:0007669"/>
    <property type="project" value="UniProtKB-UniRule"/>
</dbReference>
<dbReference type="CDD" id="cd08195">
    <property type="entry name" value="DHQS"/>
    <property type="match status" value="1"/>
</dbReference>
<dbReference type="FunFam" id="1.20.1090.10:FF:000002">
    <property type="entry name" value="3-dehydroquinate synthase"/>
    <property type="match status" value="1"/>
</dbReference>
<dbReference type="FunFam" id="3.40.50.1970:FF:000001">
    <property type="entry name" value="3-dehydroquinate synthase"/>
    <property type="match status" value="1"/>
</dbReference>
<dbReference type="Gene3D" id="3.40.50.1970">
    <property type="match status" value="1"/>
</dbReference>
<dbReference type="Gene3D" id="1.20.1090.10">
    <property type="entry name" value="Dehydroquinate synthase-like - alpha domain"/>
    <property type="match status" value="1"/>
</dbReference>
<dbReference type="HAMAP" id="MF_00110">
    <property type="entry name" value="DHQ_synthase"/>
    <property type="match status" value="1"/>
</dbReference>
<dbReference type="InterPro" id="IPR050071">
    <property type="entry name" value="Dehydroquinate_synthase"/>
</dbReference>
<dbReference type="InterPro" id="IPR016037">
    <property type="entry name" value="DHQ_synth_AroB"/>
</dbReference>
<dbReference type="InterPro" id="IPR030963">
    <property type="entry name" value="DHQ_synth_fam"/>
</dbReference>
<dbReference type="InterPro" id="IPR030960">
    <property type="entry name" value="DHQS/DOIS_N"/>
</dbReference>
<dbReference type="InterPro" id="IPR056179">
    <property type="entry name" value="DHQS_C"/>
</dbReference>
<dbReference type="NCBIfam" id="TIGR01357">
    <property type="entry name" value="aroB"/>
    <property type="match status" value="1"/>
</dbReference>
<dbReference type="PANTHER" id="PTHR43622">
    <property type="entry name" value="3-DEHYDROQUINATE SYNTHASE"/>
    <property type="match status" value="1"/>
</dbReference>
<dbReference type="PANTHER" id="PTHR43622:SF7">
    <property type="entry name" value="3-DEHYDROQUINATE SYNTHASE, CHLOROPLASTIC"/>
    <property type="match status" value="1"/>
</dbReference>
<dbReference type="Pfam" id="PF01761">
    <property type="entry name" value="DHQ_synthase"/>
    <property type="match status" value="1"/>
</dbReference>
<dbReference type="Pfam" id="PF24621">
    <property type="entry name" value="DHQS_C"/>
    <property type="match status" value="1"/>
</dbReference>
<dbReference type="PIRSF" id="PIRSF001455">
    <property type="entry name" value="DHQ_synth"/>
    <property type="match status" value="1"/>
</dbReference>
<dbReference type="SUPFAM" id="SSF56796">
    <property type="entry name" value="Dehydroquinate synthase-like"/>
    <property type="match status" value="1"/>
</dbReference>
<feature type="chain" id="PRO_1000202921" description="3-dehydroquinate synthase">
    <location>
        <begin position="1"/>
        <end position="361"/>
    </location>
</feature>
<feature type="binding site" evidence="1">
    <location>
        <begin position="70"/>
        <end position="75"/>
    </location>
    <ligand>
        <name>NAD(+)</name>
        <dbReference type="ChEBI" id="CHEBI:57540"/>
    </ligand>
</feature>
<feature type="binding site" evidence="1">
    <location>
        <begin position="104"/>
        <end position="108"/>
    </location>
    <ligand>
        <name>NAD(+)</name>
        <dbReference type="ChEBI" id="CHEBI:57540"/>
    </ligand>
</feature>
<feature type="binding site" evidence="1">
    <location>
        <begin position="128"/>
        <end position="129"/>
    </location>
    <ligand>
        <name>NAD(+)</name>
        <dbReference type="ChEBI" id="CHEBI:57540"/>
    </ligand>
</feature>
<feature type="binding site" evidence="1">
    <location>
        <position position="141"/>
    </location>
    <ligand>
        <name>NAD(+)</name>
        <dbReference type="ChEBI" id="CHEBI:57540"/>
    </ligand>
</feature>
<feature type="binding site" evidence="1">
    <location>
        <position position="150"/>
    </location>
    <ligand>
        <name>NAD(+)</name>
        <dbReference type="ChEBI" id="CHEBI:57540"/>
    </ligand>
</feature>
<feature type="binding site" evidence="1">
    <location>
        <position position="183"/>
    </location>
    <ligand>
        <name>Zn(2+)</name>
        <dbReference type="ChEBI" id="CHEBI:29105"/>
    </ligand>
</feature>
<feature type="binding site" evidence="1">
    <location>
        <position position="246"/>
    </location>
    <ligand>
        <name>Zn(2+)</name>
        <dbReference type="ChEBI" id="CHEBI:29105"/>
    </ligand>
</feature>
<feature type="binding site" evidence="1">
    <location>
        <position position="263"/>
    </location>
    <ligand>
        <name>Zn(2+)</name>
        <dbReference type="ChEBI" id="CHEBI:29105"/>
    </ligand>
</feature>
<proteinExistence type="inferred from homology"/>
<organism>
    <name type="scientific">Teredinibacter turnerae (strain ATCC 39867 / T7901)</name>
    <dbReference type="NCBI Taxonomy" id="377629"/>
    <lineage>
        <taxon>Bacteria</taxon>
        <taxon>Pseudomonadati</taxon>
        <taxon>Pseudomonadota</taxon>
        <taxon>Gammaproteobacteria</taxon>
        <taxon>Cellvibrionales</taxon>
        <taxon>Cellvibrionaceae</taxon>
        <taxon>Teredinibacter</taxon>
    </lineage>
</organism>
<sequence>MRTLNLDLGERSYPIFIGQSLLQNPALFTPHLSSQQVLVVTNTTVAPLYLAQLKATLSHCDKLDSVVLPDGEQHKTLGVLNTIFDTLIAQRHNRKTTLIALGGGVVGDMTGFAAACYQRGVNFIQVPTTLLSQVDSSVGGKTGVNHPQGKNMIGAFYQPQAVVIDTQVLDTLPERELSAGLAEVIKYGIIADIPFFEWLETNMPALLARESEALAYAIEVSCAIKARVVAQDEKESGIRAILNLGHTFGHAIESHQGYGDWVHGEAVGAGMVLACELSSRLGWLDAKECDRAVALIAAAGLPTEPPSGMSPDAFMRYMAIDKKVLDGGLRLVLQRGLGNAVVTGDFDAVVLQQLLRDRCIG</sequence>
<accession>C5BRJ7</accession>
<name>AROB_TERTT</name>
<gene>
    <name evidence="1" type="primary">aroB</name>
    <name type="ordered locus">TERTU_3579</name>
</gene>
<evidence type="ECO:0000255" key="1">
    <source>
        <dbReference type="HAMAP-Rule" id="MF_00110"/>
    </source>
</evidence>